<gene>
    <name type="primary">CSNK1G3</name>
</gene>
<sequence>MENKKKDKDKSDDRMARPSGRSGHNTRGTGSSSSGVLMVGPNFRVGKKIGCGNFGELRLGKNLYTNEYVAIKLEPMKSRAPQLHLEYRFYKQLGSGDGIPQVYYFGPCGKYNAMVLELLGPSLEDLFDLCDRTFSLKTVLMIAIQLISRMEYVHSKNLIYRDVKPENFLIGRPGNKTQQVIHIIDFGLAKEYIDPETKKHIPYREHKSLTGTARYMSINTHLGKEQSRRDDLEALGHMFMYFLRGSLPWQGLKADTLKERYQKIGDTKRATPIEVLCENFPEMATYLRYVRRLDFFEKPDYDYLRKLFTDLFDRKGYMFDYEYDWIGKQLPTPVGAVQQDPALSSNREAHQHRDKMQQSKNQSADHRAAWDSQQANPHHLRAHLAADRHGGSVQVVSSTNGELNTDDPTAGRSNAPITAPTEVEVMDETKCCCFFKRRKRKTIQRHK</sequence>
<protein>
    <recommendedName>
        <fullName>Casein kinase I isoform gamma-3</fullName>
        <shortName>CKI-gamma 3</shortName>
        <ecNumber>2.7.11.1</ecNumber>
    </recommendedName>
</protein>
<accession>Q9Y6M4</accession>
<accession>A8K040</accession>
<accession>B4DSH2</accession>
<accession>B7Z9Q4</accession>
<accession>E7EVD0</accession>
<accession>Q86WZ7</accession>
<accession>Q9Y6M3</accession>
<evidence type="ECO:0000250" key="1"/>
<evidence type="ECO:0000255" key="2">
    <source>
        <dbReference type="PROSITE-ProRule" id="PRU00159"/>
    </source>
</evidence>
<evidence type="ECO:0000255" key="3">
    <source>
        <dbReference type="PROSITE-ProRule" id="PRU10027"/>
    </source>
</evidence>
<evidence type="ECO:0000256" key="4">
    <source>
        <dbReference type="SAM" id="MobiDB-lite"/>
    </source>
</evidence>
<evidence type="ECO:0000269" key="5">
    <source ref="13"/>
</evidence>
<evidence type="ECO:0000269" key="6">
    <source ref="14"/>
</evidence>
<evidence type="ECO:0000303" key="7">
    <source>
    </source>
</evidence>
<evidence type="ECO:0000303" key="8">
    <source>
    </source>
</evidence>
<evidence type="ECO:0000303" key="9">
    <source>
    </source>
</evidence>
<evidence type="ECO:0000305" key="10"/>
<evidence type="ECO:0007744" key="11">
    <source>
        <dbReference type="PDB" id="2CHL"/>
    </source>
</evidence>
<evidence type="ECO:0007744" key="12">
    <source>
        <dbReference type="PDB" id="2IZR"/>
    </source>
</evidence>
<evidence type="ECO:0007744" key="13">
    <source>
        <dbReference type="PDB" id="2IZS"/>
    </source>
</evidence>
<evidence type="ECO:0007744" key="14">
    <source>
        <dbReference type="PDB" id="2IZT"/>
    </source>
</evidence>
<evidence type="ECO:0007744" key="15">
    <source>
        <dbReference type="PDB" id="2IZU"/>
    </source>
</evidence>
<evidence type="ECO:0007744" key="16">
    <source>
    </source>
</evidence>
<evidence type="ECO:0007744" key="17">
    <source>
    </source>
</evidence>
<evidence type="ECO:0007744" key="18">
    <source>
    </source>
</evidence>
<evidence type="ECO:0007829" key="19">
    <source>
        <dbReference type="PDB" id="2IZR"/>
    </source>
</evidence>
<evidence type="ECO:0007829" key="20">
    <source>
        <dbReference type="PDB" id="2IZS"/>
    </source>
</evidence>
<evidence type="ECO:0007829" key="21">
    <source>
        <dbReference type="PDB" id="2IZU"/>
    </source>
</evidence>
<evidence type="ECO:0007829" key="22">
    <source>
        <dbReference type="PDB" id="6GRO"/>
    </source>
</evidence>
<proteinExistence type="evidence at protein level"/>
<keyword id="KW-0002">3D-structure</keyword>
<keyword id="KW-0007">Acetylation</keyword>
<keyword id="KW-0025">Alternative splicing</keyword>
<keyword id="KW-0067">ATP-binding</keyword>
<keyword id="KW-0963">Cytoplasm</keyword>
<keyword id="KW-0418">Kinase</keyword>
<keyword id="KW-0547">Nucleotide-binding</keyword>
<keyword id="KW-0597">Phosphoprotein</keyword>
<keyword id="KW-1267">Proteomics identification</keyword>
<keyword id="KW-1185">Reference proteome</keyword>
<keyword id="KW-0723">Serine/threonine-protein kinase</keyword>
<keyword id="KW-0808">Transferase</keyword>
<keyword id="KW-0879">Wnt signaling pathway</keyword>
<comment type="function">
    <text evidence="1">Serine/threonine-protein kinase. Casein kinases are operationally defined by their preferential utilization of acidic proteins such as caseins as substrates. It can phosphorylate a large number of proteins. Participates in Wnt signaling. Regulates fast synaptic transmission mediated by glutamate (By similarity).</text>
</comment>
<comment type="catalytic activity">
    <reaction>
        <text>L-seryl-[protein] + ATP = O-phospho-L-seryl-[protein] + ADP + H(+)</text>
        <dbReference type="Rhea" id="RHEA:17989"/>
        <dbReference type="Rhea" id="RHEA-COMP:9863"/>
        <dbReference type="Rhea" id="RHEA-COMP:11604"/>
        <dbReference type="ChEBI" id="CHEBI:15378"/>
        <dbReference type="ChEBI" id="CHEBI:29999"/>
        <dbReference type="ChEBI" id="CHEBI:30616"/>
        <dbReference type="ChEBI" id="CHEBI:83421"/>
        <dbReference type="ChEBI" id="CHEBI:456216"/>
        <dbReference type="EC" id="2.7.11.1"/>
    </reaction>
</comment>
<comment type="catalytic activity">
    <reaction>
        <text>L-threonyl-[protein] + ATP = O-phospho-L-threonyl-[protein] + ADP + H(+)</text>
        <dbReference type="Rhea" id="RHEA:46608"/>
        <dbReference type="Rhea" id="RHEA-COMP:11060"/>
        <dbReference type="Rhea" id="RHEA-COMP:11605"/>
        <dbReference type="ChEBI" id="CHEBI:15378"/>
        <dbReference type="ChEBI" id="CHEBI:30013"/>
        <dbReference type="ChEBI" id="CHEBI:30616"/>
        <dbReference type="ChEBI" id="CHEBI:61977"/>
        <dbReference type="ChEBI" id="CHEBI:456216"/>
        <dbReference type="EC" id="2.7.11.1"/>
    </reaction>
</comment>
<comment type="activity regulation">
    <text evidence="5 6">Inhibited by triazolodiamine 1 (5-amino-3-([4-(aminosulfonyl)phenyl]amino)-N-(2,6-difluorophenyl)-1H-1,2,4-triazole-1-carbothioamide), (S)-propane-1,2-diol, 2-({6-[(3-chlorophenyl)amino]-9-isopropyl-9H-purin-2-yl}amino)-3-methylbutan-1-ol, N2-[(1R,2S)-2-aminocyclohexyl]-N6-(3-chlorophenyl)-9-ethyl-9H-purine-2,6-diamine and [4-amino-2-(3-chloroanilino)-1,3-thiazol-5-yl](4-fluorophenyl)methanone.</text>
</comment>
<comment type="subunit">
    <text evidence="1">Monomer.</text>
</comment>
<comment type="interaction">
    <interactant intactId="EBI-1383789">
        <id>Q9Y6M4</id>
    </interactant>
    <interactant intactId="EBI-1383814">
        <id>Q9HCP0</id>
        <label>CSNK1G1</label>
    </interactant>
    <organismsDiffer>false</organismsDiffer>
    <experiments>2</experiments>
</comment>
<comment type="interaction">
    <interactant intactId="EBI-11045281">
        <id>Q9Y6M4-3</id>
    </interactant>
    <interactant intactId="EBI-10253641">
        <id>Q6PGQ1</id>
        <label>DRICH1</label>
    </interactant>
    <organismsDiffer>false</organismsDiffer>
    <experiments>3</experiments>
</comment>
<comment type="interaction">
    <interactant intactId="EBI-11045281">
        <id>Q9Y6M4-3</id>
    </interactant>
    <interactant intactId="EBI-11955579">
        <id>P60014</id>
        <label>KRTAP10-10</label>
    </interactant>
    <organismsDiffer>false</organismsDiffer>
    <experiments>3</experiments>
</comment>
<comment type="interaction">
    <interactant intactId="EBI-11045281">
        <id>Q9Y6M4-3</id>
    </interactant>
    <interactant intactId="EBI-724076">
        <id>Q99750</id>
        <label>MDFI</label>
    </interactant>
    <organismsDiffer>false</organismsDiffer>
    <experiments>3</experiments>
</comment>
<comment type="subcellular location">
    <subcellularLocation>
        <location>Cytoplasm</location>
    </subcellularLocation>
</comment>
<comment type="alternative products">
    <event type="alternative splicing"/>
    <isoform>
        <id>Q9Y6M4-1</id>
        <name>1</name>
        <name>3</name>
        <sequence type="displayed"/>
    </isoform>
    <isoform>
        <id>Q9Y6M4-2</id>
        <name>2</name>
        <name>3L</name>
        <name>CSNK1G3L</name>
        <sequence type="described" ref="VSP_004749"/>
    </isoform>
    <isoform>
        <id>Q9Y6M4-3</id>
        <name>3</name>
        <sequence type="described" ref="VSP_010256 VSP_004749"/>
    </isoform>
    <isoform>
        <id>Q9Y6M4-4</id>
        <name>4</name>
        <sequence type="described" ref="VSP_047055 VSP_010256 VSP_004749"/>
    </isoform>
    <isoform>
        <id>Q9Y6M4-5</id>
        <name>5</name>
        <sequence type="described" ref="VSP_047054 VSP_010256 VSP_004749"/>
    </isoform>
    <isoform>
        <id>Q9Y6M4-6</id>
        <name>6</name>
        <sequence type="described" ref="VSP_047053 VSP_047055 VSP_010256 VSP_004749"/>
    </isoform>
</comment>
<comment type="PTM">
    <text evidence="1">Autophosphorylated.</text>
</comment>
<comment type="similarity">
    <text evidence="10">Belongs to the protein kinase superfamily. CK1 Ser/Thr protein kinase family. Casein kinase I subfamily.</text>
</comment>
<dbReference type="EC" id="2.7.11.1"/>
<dbReference type="EMBL" id="AF049089">
    <property type="protein sequence ID" value="AAD26525.1"/>
    <property type="molecule type" value="mRNA"/>
</dbReference>
<dbReference type="EMBL" id="AF049090">
    <property type="protein sequence ID" value="AAD26526.1"/>
    <property type="molecule type" value="mRNA"/>
</dbReference>
<dbReference type="EMBL" id="AK289405">
    <property type="protein sequence ID" value="BAF82094.1"/>
    <property type="molecule type" value="mRNA"/>
</dbReference>
<dbReference type="EMBL" id="AK299739">
    <property type="protein sequence ID" value="BAG61634.1"/>
    <property type="molecule type" value="mRNA"/>
</dbReference>
<dbReference type="EMBL" id="AK316019">
    <property type="protein sequence ID" value="BAH14390.1"/>
    <property type="molecule type" value="mRNA"/>
</dbReference>
<dbReference type="EMBL" id="AC008541">
    <property type="status" value="NOT_ANNOTATED_CDS"/>
    <property type="molecule type" value="Genomic_DNA"/>
</dbReference>
<dbReference type="EMBL" id="AC026422">
    <property type="status" value="NOT_ANNOTATED_CDS"/>
    <property type="molecule type" value="Genomic_DNA"/>
</dbReference>
<dbReference type="EMBL" id="CH471086">
    <property type="protein sequence ID" value="EAW48872.1"/>
    <property type="molecule type" value="Genomic_DNA"/>
</dbReference>
<dbReference type="EMBL" id="BC047567">
    <property type="protein sequence ID" value="AAH47567.1"/>
    <property type="molecule type" value="mRNA"/>
</dbReference>
<dbReference type="CCDS" id="CCDS34218.1">
    <molecule id="Q9Y6M4-3"/>
</dbReference>
<dbReference type="CCDS" id="CCDS4135.1">
    <molecule id="Q9Y6M4-1"/>
</dbReference>
<dbReference type="CCDS" id="CCDS43355.1">
    <molecule id="Q9Y6M4-2"/>
</dbReference>
<dbReference type="CCDS" id="CCDS59491.1">
    <molecule id="Q9Y6M4-4"/>
</dbReference>
<dbReference type="CCDS" id="CCDS59492.1">
    <molecule id="Q9Y6M4-5"/>
</dbReference>
<dbReference type="CCDS" id="CCDS59493.1">
    <molecule id="Q9Y6M4-6"/>
</dbReference>
<dbReference type="RefSeq" id="NP_001026982.1">
    <molecule id="Q9Y6M4-3"/>
    <property type="nucleotide sequence ID" value="NM_001031812.4"/>
</dbReference>
<dbReference type="RefSeq" id="NP_001038188.1">
    <molecule id="Q9Y6M4-2"/>
    <property type="nucleotide sequence ID" value="NM_001044723.2"/>
</dbReference>
<dbReference type="RefSeq" id="NP_001257501.1">
    <molecule id="Q9Y6M4-4"/>
    <property type="nucleotide sequence ID" value="NM_001270572.1"/>
</dbReference>
<dbReference type="RefSeq" id="NP_001257502.1">
    <molecule id="Q9Y6M4-5"/>
    <property type="nucleotide sequence ID" value="NM_001270573.2"/>
</dbReference>
<dbReference type="RefSeq" id="NP_001257503.1">
    <molecule id="Q9Y6M4-6"/>
    <property type="nucleotide sequence ID" value="NM_001270574.2"/>
</dbReference>
<dbReference type="RefSeq" id="NP_001351078.1">
    <molecule id="Q9Y6M4-5"/>
    <property type="nucleotide sequence ID" value="NM_001364149.2"/>
</dbReference>
<dbReference type="RefSeq" id="NP_001351079.1">
    <molecule id="Q9Y6M4-5"/>
    <property type="nucleotide sequence ID" value="NM_001364150.2"/>
</dbReference>
<dbReference type="RefSeq" id="NP_004375.2">
    <molecule id="Q9Y6M4-1"/>
    <property type="nucleotide sequence ID" value="NM_004384.5"/>
</dbReference>
<dbReference type="RefSeq" id="XP_005271949.1">
    <molecule id="Q9Y6M4-2"/>
    <property type="nucleotide sequence ID" value="XM_005271892.4"/>
</dbReference>
<dbReference type="RefSeq" id="XP_005271951.1">
    <property type="nucleotide sequence ID" value="XM_005271894.2"/>
</dbReference>
<dbReference type="RefSeq" id="XP_005271952.1">
    <molecule id="Q9Y6M4-4"/>
    <property type="nucleotide sequence ID" value="XM_005271895.4"/>
</dbReference>
<dbReference type="RefSeq" id="XP_016864558.1">
    <molecule id="Q9Y6M4-4"/>
    <property type="nucleotide sequence ID" value="XM_017009069.2"/>
</dbReference>
<dbReference type="RefSeq" id="XP_047272705.1">
    <molecule id="Q9Y6M4-2"/>
    <property type="nucleotide sequence ID" value="XM_047416749.1"/>
</dbReference>
<dbReference type="RefSeq" id="XP_047272706.1">
    <molecule id="Q9Y6M4-2"/>
    <property type="nucleotide sequence ID" value="XM_047416750.1"/>
</dbReference>
<dbReference type="RefSeq" id="XP_047272714.1">
    <molecule id="Q9Y6M4-1"/>
    <property type="nucleotide sequence ID" value="XM_047416758.1"/>
</dbReference>
<dbReference type="RefSeq" id="XP_047272721.1">
    <molecule id="Q9Y6M4-4"/>
    <property type="nucleotide sequence ID" value="XM_047416765.1"/>
</dbReference>
<dbReference type="RefSeq" id="XP_047272722.1">
    <molecule id="Q9Y6M4-3"/>
    <property type="nucleotide sequence ID" value="XM_047416766.1"/>
</dbReference>
<dbReference type="RefSeq" id="XP_047272723.1">
    <molecule id="Q9Y6M4-3"/>
    <property type="nucleotide sequence ID" value="XM_047416767.1"/>
</dbReference>
<dbReference type="RefSeq" id="XP_047272724.1">
    <molecule id="Q9Y6M4-3"/>
    <property type="nucleotide sequence ID" value="XM_047416768.1"/>
</dbReference>
<dbReference type="RefSeq" id="XP_047272725.1">
    <molecule id="Q9Y6M4-3"/>
    <property type="nucleotide sequence ID" value="XM_047416769.1"/>
</dbReference>
<dbReference type="RefSeq" id="XP_054207651.1">
    <molecule id="Q9Y6M4-2"/>
    <property type="nucleotide sequence ID" value="XM_054351676.1"/>
</dbReference>
<dbReference type="RefSeq" id="XP_054207652.1">
    <molecule id="Q9Y6M4-2"/>
    <property type="nucleotide sequence ID" value="XM_054351677.1"/>
</dbReference>
<dbReference type="RefSeq" id="XP_054207653.1">
    <molecule id="Q9Y6M4-2"/>
    <property type="nucleotide sequence ID" value="XM_054351678.1"/>
</dbReference>
<dbReference type="RefSeq" id="XP_054207662.1">
    <molecule id="Q9Y6M4-1"/>
    <property type="nucleotide sequence ID" value="XM_054351687.1"/>
</dbReference>
<dbReference type="RefSeq" id="XP_054207670.1">
    <molecule id="Q9Y6M4-4"/>
    <property type="nucleotide sequence ID" value="XM_054351695.1"/>
</dbReference>
<dbReference type="RefSeq" id="XP_054207671.1">
    <molecule id="Q9Y6M4-4"/>
    <property type="nucleotide sequence ID" value="XM_054351696.1"/>
</dbReference>
<dbReference type="RefSeq" id="XP_054207672.1">
    <molecule id="Q9Y6M4-4"/>
    <property type="nucleotide sequence ID" value="XM_054351697.1"/>
</dbReference>
<dbReference type="RefSeq" id="XP_054207673.1">
    <molecule id="Q9Y6M4-3"/>
    <property type="nucleotide sequence ID" value="XM_054351698.1"/>
</dbReference>
<dbReference type="RefSeq" id="XP_054207674.1">
    <molecule id="Q9Y6M4-3"/>
    <property type="nucleotide sequence ID" value="XM_054351699.1"/>
</dbReference>
<dbReference type="RefSeq" id="XP_054207675.1">
    <molecule id="Q9Y6M4-3"/>
    <property type="nucleotide sequence ID" value="XM_054351700.1"/>
</dbReference>
<dbReference type="RefSeq" id="XP_054207676.1">
    <molecule id="Q9Y6M4-3"/>
    <property type="nucleotide sequence ID" value="XM_054351701.1"/>
</dbReference>
<dbReference type="PDB" id="2CHL">
    <property type="method" value="X-ray"/>
    <property type="resolution" value="1.95 A"/>
    <property type="chains" value="A=35-362"/>
</dbReference>
<dbReference type="PDB" id="2IZR">
    <property type="method" value="X-ray"/>
    <property type="resolution" value="1.30 A"/>
    <property type="chains" value="A=35-362"/>
</dbReference>
<dbReference type="PDB" id="2IZS">
    <property type="method" value="X-ray"/>
    <property type="resolution" value="1.95 A"/>
    <property type="chains" value="A=35-362"/>
</dbReference>
<dbReference type="PDB" id="2IZT">
    <property type="method" value="X-ray"/>
    <property type="resolution" value="2.00 A"/>
    <property type="chains" value="A=35-362"/>
</dbReference>
<dbReference type="PDB" id="2IZU">
    <property type="method" value="X-ray"/>
    <property type="resolution" value="1.85 A"/>
    <property type="chains" value="A=35-362"/>
</dbReference>
<dbReference type="PDB" id="4G16">
    <property type="method" value="X-ray"/>
    <property type="resolution" value="2.30 A"/>
    <property type="chains" value="A=34-362"/>
</dbReference>
<dbReference type="PDB" id="4G17">
    <property type="method" value="X-ray"/>
    <property type="resolution" value="2.10 A"/>
    <property type="chains" value="A=34-362"/>
</dbReference>
<dbReference type="PDB" id="4HGL">
    <property type="method" value="X-ray"/>
    <property type="resolution" value="2.40 A"/>
    <property type="chains" value="A=34-362"/>
</dbReference>
<dbReference type="PDB" id="4HGS">
    <property type="method" value="X-ray"/>
    <property type="resolution" value="2.40 A"/>
    <property type="chains" value="A=34-362"/>
</dbReference>
<dbReference type="PDB" id="6GRO">
    <property type="method" value="X-ray"/>
    <property type="resolution" value="1.45 A"/>
    <property type="chains" value="A=33-362"/>
</dbReference>
<dbReference type="PDBsum" id="2CHL"/>
<dbReference type="PDBsum" id="2IZR"/>
<dbReference type="PDBsum" id="2IZS"/>
<dbReference type="PDBsum" id="2IZT"/>
<dbReference type="PDBsum" id="2IZU"/>
<dbReference type="PDBsum" id="4G16"/>
<dbReference type="PDBsum" id="4G17"/>
<dbReference type="PDBsum" id="4HGL"/>
<dbReference type="PDBsum" id="4HGS"/>
<dbReference type="PDBsum" id="6GRO"/>
<dbReference type="SMR" id="Q9Y6M4"/>
<dbReference type="BioGRID" id="107840">
    <property type="interactions" value="146"/>
</dbReference>
<dbReference type="FunCoup" id="Q9Y6M4">
    <property type="interactions" value="3504"/>
</dbReference>
<dbReference type="IntAct" id="Q9Y6M4">
    <property type="interactions" value="91"/>
</dbReference>
<dbReference type="MINT" id="Q9Y6M4"/>
<dbReference type="STRING" id="9606.ENSP00000353904"/>
<dbReference type="BindingDB" id="Q9Y6M4"/>
<dbReference type="ChEMBL" id="CHEMBL5084"/>
<dbReference type="DrugBank" id="DB07489">
    <property type="generic name" value="4-Amino-2-[(3-chlorophenyl)amino]-5-(4-fluorobenzoyl)-1,3-thiazol-3-ium"/>
</dbReference>
<dbReference type="DrugBank" id="DB07664">
    <property type="generic name" value="K-00546"/>
</dbReference>
<dbReference type="DrugBank" id="DB04751">
    <property type="generic name" value="Purvalanol A"/>
</dbReference>
<dbReference type="DrugBank" id="DB07488">
    <property type="generic name" value="{4-Amino-2-[(4-methoxyphenyl)amino]-1,3-thiazol-5-yl}(4-methoxyphenyl)methanone"/>
</dbReference>
<dbReference type="DrugCentral" id="Q9Y6M4"/>
<dbReference type="iPTMnet" id="Q9Y6M4"/>
<dbReference type="PhosphoSitePlus" id="Q9Y6M4"/>
<dbReference type="SwissPalm" id="Q9Y6M4"/>
<dbReference type="BioMuta" id="CSNK1G3"/>
<dbReference type="DMDM" id="47117932"/>
<dbReference type="CPTAC" id="non-CPTAC-5627"/>
<dbReference type="jPOST" id="Q9Y6M4"/>
<dbReference type="MassIVE" id="Q9Y6M4"/>
<dbReference type="PaxDb" id="9606-ENSP00000353904"/>
<dbReference type="PeptideAtlas" id="Q9Y6M4"/>
<dbReference type="ProteomicsDB" id="1831"/>
<dbReference type="ProteomicsDB" id="18613"/>
<dbReference type="ProteomicsDB" id="5025"/>
<dbReference type="ProteomicsDB" id="86730">
    <molecule id="Q9Y6M4-1"/>
</dbReference>
<dbReference type="ProteomicsDB" id="86731">
    <molecule id="Q9Y6M4-2"/>
</dbReference>
<dbReference type="ProteomicsDB" id="86732">
    <molecule id="Q9Y6M4-3"/>
</dbReference>
<dbReference type="Pumba" id="Q9Y6M4"/>
<dbReference type="Antibodypedia" id="25674">
    <property type="antibodies" value="164 antibodies from 28 providers"/>
</dbReference>
<dbReference type="DNASU" id="1456"/>
<dbReference type="Ensembl" id="ENST00000345990.9">
    <molecule id="Q9Y6M4-2"/>
    <property type="protein sequence ID" value="ENSP00000334735.5"/>
    <property type="gene ID" value="ENSG00000151292.19"/>
</dbReference>
<dbReference type="Ensembl" id="ENST00000360683.6">
    <molecule id="Q9Y6M4-2"/>
    <property type="protein sequence ID" value="ENSP00000353904.2"/>
    <property type="gene ID" value="ENSG00000151292.19"/>
</dbReference>
<dbReference type="Ensembl" id="ENST00000361991.6">
    <molecule id="Q9Y6M4-1"/>
    <property type="protein sequence ID" value="ENSP00000354942.2"/>
    <property type="gene ID" value="ENSG00000151292.19"/>
</dbReference>
<dbReference type="Ensembl" id="ENST00000510842.6">
    <molecule id="Q9Y6M4-4"/>
    <property type="protein sequence ID" value="ENSP00000423838.2"/>
    <property type="gene ID" value="ENSG00000151292.19"/>
</dbReference>
<dbReference type="Ensembl" id="ENST00000511130.6">
    <molecule id="Q9Y6M4-6"/>
    <property type="protein sequence ID" value="ENSP00000421385.2"/>
    <property type="gene ID" value="ENSG00000151292.19"/>
</dbReference>
<dbReference type="Ensembl" id="ENST00000512718.7">
    <molecule id="Q9Y6M4-5"/>
    <property type="protein sequence ID" value="ENSP00000421998.3"/>
    <property type="gene ID" value="ENSG00000151292.19"/>
</dbReference>
<dbReference type="Ensembl" id="ENST00000521364.5">
    <molecule id="Q9Y6M4-3"/>
    <property type="protein sequence ID" value="ENSP00000429412.1"/>
    <property type="gene ID" value="ENSG00000151292.19"/>
</dbReference>
<dbReference type="GeneID" id="1456"/>
<dbReference type="KEGG" id="hsa:1456"/>
<dbReference type="UCSC" id="uc003ktn.5">
    <molecule id="Q9Y6M4-1"/>
    <property type="organism name" value="human"/>
</dbReference>
<dbReference type="AGR" id="HGNC:2456"/>
<dbReference type="CTD" id="1456"/>
<dbReference type="DisGeNET" id="1456"/>
<dbReference type="GeneCards" id="CSNK1G3"/>
<dbReference type="HGNC" id="HGNC:2456">
    <property type="gene designation" value="CSNK1G3"/>
</dbReference>
<dbReference type="HPA" id="ENSG00000151292">
    <property type="expression patterns" value="Low tissue specificity"/>
</dbReference>
<dbReference type="MIM" id="604253">
    <property type="type" value="gene"/>
</dbReference>
<dbReference type="neXtProt" id="NX_Q9Y6M4"/>
<dbReference type="OpenTargets" id="ENSG00000151292"/>
<dbReference type="PharmGKB" id="PA26956"/>
<dbReference type="VEuPathDB" id="HostDB:ENSG00000151292"/>
<dbReference type="eggNOG" id="KOG1165">
    <property type="taxonomic scope" value="Eukaryota"/>
</dbReference>
<dbReference type="GeneTree" id="ENSGT00940000160646"/>
<dbReference type="HOGENOM" id="CLU_019279_2_0_1"/>
<dbReference type="InParanoid" id="Q9Y6M4"/>
<dbReference type="OMA" id="YMTYVRS"/>
<dbReference type="OrthoDB" id="5800476at2759"/>
<dbReference type="PAN-GO" id="Q9Y6M4">
    <property type="GO annotations" value="8 GO annotations based on evolutionary models"/>
</dbReference>
<dbReference type="PhylomeDB" id="Q9Y6M4"/>
<dbReference type="TreeFam" id="TF313349"/>
<dbReference type="BRENDA" id="2.7.11.1">
    <property type="organism ID" value="2681"/>
</dbReference>
<dbReference type="PathwayCommons" id="Q9Y6M4"/>
<dbReference type="SignaLink" id="Q9Y6M4"/>
<dbReference type="SIGNOR" id="Q9Y6M4"/>
<dbReference type="BioGRID-ORCS" id="1456">
    <property type="hits" value="12 hits in 1196 CRISPR screens"/>
</dbReference>
<dbReference type="ChiTaRS" id="CSNK1G3">
    <property type="organism name" value="human"/>
</dbReference>
<dbReference type="EvolutionaryTrace" id="Q9Y6M4"/>
<dbReference type="GenomeRNAi" id="1456"/>
<dbReference type="Pharos" id="Q9Y6M4">
    <property type="development level" value="Tchem"/>
</dbReference>
<dbReference type="PRO" id="PR:Q9Y6M4"/>
<dbReference type="Proteomes" id="UP000005640">
    <property type="component" value="Chromosome 5"/>
</dbReference>
<dbReference type="RNAct" id="Q9Y6M4">
    <property type="molecule type" value="protein"/>
</dbReference>
<dbReference type="Bgee" id="ENSG00000151292">
    <property type="expression patterns" value="Expressed in calcaneal tendon and 200 other cell types or tissues"/>
</dbReference>
<dbReference type="ExpressionAtlas" id="Q9Y6M4">
    <property type="expression patterns" value="baseline and differential"/>
</dbReference>
<dbReference type="GO" id="GO:0005737">
    <property type="term" value="C:cytoplasm"/>
    <property type="evidence" value="ECO:0000318"/>
    <property type="project" value="GO_Central"/>
</dbReference>
<dbReference type="GO" id="GO:0005634">
    <property type="term" value="C:nucleus"/>
    <property type="evidence" value="ECO:0000318"/>
    <property type="project" value="GO_Central"/>
</dbReference>
<dbReference type="GO" id="GO:0005886">
    <property type="term" value="C:plasma membrane"/>
    <property type="evidence" value="ECO:0000318"/>
    <property type="project" value="GO_Central"/>
</dbReference>
<dbReference type="GO" id="GO:0005524">
    <property type="term" value="F:ATP binding"/>
    <property type="evidence" value="ECO:0007669"/>
    <property type="project" value="UniProtKB-KW"/>
</dbReference>
<dbReference type="GO" id="GO:0004672">
    <property type="term" value="F:protein kinase activity"/>
    <property type="evidence" value="ECO:0000304"/>
    <property type="project" value="ProtInc"/>
</dbReference>
<dbReference type="GO" id="GO:0106310">
    <property type="term" value="F:protein serine kinase activity"/>
    <property type="evidence" value="ECO:0007669"/>
    <property type="project" value="RHEA"/>
</dbReference>
<dbReference type="GO" id="GO:0004674">
    <property type="term" value="F:protein serine/threonine kinase activity"/>
    <property type="evidence" value="ECO:0000314"/>
    <property type="project" value="ParkinsonsUK-UCL"/>
</dbReference>
<dbReference type="GO" id="GO:0006897">
    <property type="term" value="P:endocytosis"/>
    <property type="evidence" value="ECO:0000318"/>
    <property type="project" value="GO_Central"/>
</dbReference>
<dbReference type="GO" id="GO:0090263">
    <property type="term" value="P:positive regulation of canonical Wnt signaling pathway"/>
    <property type="evidence" value="ECO:0000318"/>
    <property type="project" value="GO_Central"/>
</dbReference>
<dbReference type="GO" id="GO:0036211">
    <property type="term" value="P:protein modification process"/>
    <property type="evidence" value="ECO:0000304"/>
    <property type="project" value="ProtInc"/>
</dbReference>
<dbReference type="GO" id="GO:0007165">
    <property type="term" value="P:signal transduction"/>
    <property type="evidence" value="ECO:0000318"/>
    <property type="project" value="GO_Central"/>
</dbReference>
<dbReference type="GO" id="GO:0016055">
    <property type="term" value="P:Wnt signaling pathway"/>
    <property type="evidence" value="ECO:0007669"/>
    <property type="project" value="UniProtKB-KW"/>
</dbReference>
<dbReference type="CDD" id="cd14126">
    <property type="entry name" value="STKc_CK1_gamma"/>
    <property type="match status" value="1"/>
</dbReference>
<dbReference type="FunFam" id="1.10.510.10:FF:001113">
    <property type="entry name" value="Casein kinase 1 gamma 2"/>
    <property type="match status" value="1"/>
</dbReference>
<dbReference type="FunFam" id="3.30.200.20:FF:000018">
    <property type="entry name" value="Casein kinase I isoform gamma-1"/>
    <property type="match status" value="1"/>
</dbReference>
<dbReference type="Gene3D" id="3.30.200.20">
    <property type="entry name" value="Phosphorylase Kinase, domain 1"/>
    <property type="match status" value="1"/>
</dbReference>
<dbReference type="Gene3D" id="1.10.510.10">
    <property type="entry name" value="Transferase(Phosphotransferase) domain 1"/>
    <property type="match status" value="1"/>
</dbReference>
<dbReference type="InterPro" id="IPR022247">
    <property type="entry name" value="Casein_kinase-1_gamma_C"/>
</dbReference>
<dbReference type="InterPro" id="IPR050235">
    <property type="entry name" value="CK1_Ser-Thr_kinase"/>
</dbReference>
<dbReference type="InterPro" id="IPR011009">
    <property type="entry name" value="Kinase-like_dom_sf"/>
</dbReference>
<dbReference type="InterPro" id="IPR000719">
    <property type="entry name" value="Prot_kinase_dom"/>
</dbReference>
<dbReference type="InterPro" id="IPR017441">
    <property type="entry name" value="Protein_kinase_ATP_BS"/>
</dbReference>
<dbReference type="InterPro" id="IPR008271">
    <property type="entry name" value="Ser/Thr_kinase_AS"/>
</dbReference>
<dbReference type="PANTHER" id="PTHR11909">
    <property type="entry name" value="CASEIN KINASE-RELATED"/>
    <property type="match status" value="1"/>
</dbReference>
<dbReference type="Pfam" id="PF12605">
    <property type="entry name" value="CK1gamma_C"/>
    <property type="match status" value="1"/>
</dbReference>
<dbReference type="Pfam" id="PF00069">
    <property type="entry name" value="Pkinase"/>
    <property type="match status" value="1"/>
</dbReference>
<dbReference type="SMART" id="SM00220">
    <property type="entry name" value="S_TKc"/>
    <property type="match status" value="1"/>
</dbReference>
<dbReference type="SUPFAM" id="SSF56112">
    <property type="entry name" value="Protein kinase-like (PK-like)"/>
    <property type="match status" value="1"/>
</dbReference>
<dbReference type="PROSITE" id="PS00107">
    <property type="entry name" value="PROTEIN_KINASE_ATP"/>
    <property type="match status" value="1"/>
</dbReference>
<dbReference type="PROSITE" id="PS50011">
    <property type="entry name" value="PROTEIN_KINASE_DOM"/>
    <property type="match status" value="1"/>
</dbReference>
<dbReference type="PROSITE" id="PS00108">
    <property type="entry name" value="PROTEIN_KINASE_ST"/>
    <property type="match status" value="1"/>
</dbReference>
<feature type="chain" id="PRO_0000192846" description="Casein kinase I isoform gamma-3">
    <location>
        <begin position="1"/>
        <end position="447"/>
    </location>
</feature>
<feature type="domain" description="Protein kinase" evidence="2">
    <location>
        <begin position="43"/>
        <end position="313"/>
    </location>
</feature>
<feature type="region of interest" description="Disordered" evidence="4">
    <location>
        <begin position="1"/>
        <end position="35"/>
    </location>
</feature>
<feature type="region of interest" description="Disordered" evidence="4">
    <location>
        <begin position="341"/>
        <end position="374"/>
    </location>
</feature>
<feature type="region of interest" description="Disordered" evidence="4">
    <location>
        <begin position="391"/>
        <end position="416"/>
    </location>
</feature>
<feature type="compositionally biased region" description="Basic and acidic residues" evidence="4">
    <location>
        <begin position="1"/>
        <end position="16"/>
    </location>
</feature>
<feature type="compositionally biased region" description="Polar residues" evidence="4">
    <location>
        <begin position="22"/>
        <end position="35"/>
    </location>
</feature>
<feature type="compositionally biased region" description="Basic and acidic residues" evidence="4">
    <location>
        <begin position="347"/>
        <end position="369"/>
    </location>
</feature>
<feature type="compositionally biased region" description="Polar residues" evidence="4">
    <location>
        <begin position="394"/>
        <end position="416"/>
    </location>
</feature>
<feature type="active site" description="Proton acceptor" evidence="2 3">
    <location>
        <position position="162"/>
    </location>
</feature>
<feature type="binding site" evidence="2">
    <location>
        <begin position="49"/>
        <end position="57"/>
    </location>
    <ligand>
        <name>ATP</name>
        <dbReference type="ChEBI" id="CHEBI:30616"/>
    </ligand>
</feature>
<feature type="binding site" evidence="2">
    <location>
        <position position="72"/>
    </location>
    <ligand>
        <name>ATP</name>
        <dbReference type="ChEBI" id="CHEBI:30616"/>
    </ligand>
</feature>
<feature type="modified residue" description="N-acetylmethionine" evidence="18">
    <location>
        <position position="1"/>
    </location>
</feature>
<feature type="modified residue" description="Phosphoserine" evidence="16">
    <location>
        <position position="413"/>
    </location>
</feature>
<feature type="splice variant" id="VSP_047053" description="In isoform 6." evidence="7">
    <location>
        <begin position="1"/>
        <end position="113"/>
    </location>
</feature>
<feature type="splice variant" id="VSP_047054" description="In isoform 5." evidence="7">
    <location>
        <begin position="1"/>
        <end position="75"/>
    </location>
</feature>
<feature type="splice variant" id="VSP_047055" description="In isoform 4 and isoform 6." evidence="7">
    <original>E</original>
    <variation>EE</variation>
    <location>
        <position position="282"/>
    </location>
</feature>
<feature type="splice variant" id="VSP_010256" description="In isoform 3, isoform 4, isoform 5 and isoform 6." evidence="7 8">
    <location>
        <begin position="363"/>
        <end position="394"/>
    </location>
</feature>
<feature type="splice variant" id="VSP_004749" description="In isoform 2, isoform 3, isoform 4, isoform 5 and isoform 6." evidence="7 8 9">
    <original>K</original>
    <variation>NCQKVLNMW</variation>
    <location>
        <position position="430"/>
    </location>
</feature>
<feature type="sequence conflict" description="In Ref. 5; AAH47567." evidence="10" ref="5">
    <original>K</original>
    <variation>E</variation>
    <location>
        <position position="91"/>
    </location>
</feature>
<feature type="sequence conflict" description="In Ref. 1; AAD26525/AAD26526." evidence="10" ref="1">
    <original>G</original>
    <variation>R</variation>
    <location>
        <position position="174"/>
    </location>
</feature>
<feature type="sequence conflict" description="In Ref. 2; BAH14390." evidence="10" ref="2">
    <original>Y</original>
    <variation>C</variation>
    <location>
        <position position="241"/>
    </location>
</feature>
<feature type="sequence conflict" description="In Ref. 1; AAD26525/AAD26526." evidence="10" ref="1">
    <original>D</original>
    <variation>E</variation>
    <location>
        <position position="302"/>
    </location>
</feature>
<feature type="turn" evidence="19">
    <location>
        <begin position="40"/>
        <end position="42"/>
    </location>
</feature>
<feature type="strand" evidence="19">
    <location>
        <begin position="43"/>
        <end position="48"/>
    </location>
</feature>
<feature type="strand" evidence="20">
    <location>
        <begin position="50"/>
        <end position="52"/>
    </location>
</feature>
<feature type="strand" evidence="19">
    <location>
        <begin position="56"/>
        <end position="62"/>
    </location>
</feature>
<feature type="turn" evidence="19">
    <location>
        <begin position="63"/>
        <end position="66"/>
    </location>
</feature>
<feature type="strand" evidence="19">
    <location>
        <begin position="67"/>
        <end position="75"/>
    </location>
</feature>
<feature type="helix" evidence="19">
    <location>
        <begin position="83"/>
        <end position="93"/>
    </location>
</feature>
<feature type="strand" evidence="19">
    <location>
        <begin position="102"/>
        <end position="108"/>
    </location>
</feature>
<feature type="strand" evidence="19">
    <location>
        <begin position="111"/>
        <end position="117"/>
    </location>
</feature>
<feature type="helix" evidence="19">
    <location>
        <begin position="123"/>
        <end position="129"/>
    </location>
</feature>
<feature type="turn" evidence="19">
    <location>
        <begin position="130"/>
        <end position="132"/>
    </location>
</feature>
<feature type="helix" evidence="19">
    <location>
        <begin position="136"/>
        <end position="155"/>
    </location>
</feature>
<feature type="helix" evidence="19">
    <location>
        <begin position="165"/>
        <end position="167"/>
    </location>
</feature>
<feature type="strand" evidence="19">
    <location>
        <begin position="168"/>
        <end position="170"/>
    </location>
</feature>
<feature type="helix" evidence="19">
    <location>
        <begin position="173"/>
        <end position="175"/>
    </location>
</feature>
<feature type="turn" evidence="22">
    <location>
        <begin position="176"/>
        <end position="179"/>
    </location>
</feature>
<feature type="strand" evidence="19">
    <location>
        <begin position="180"/>
        <end position="183"/>
    </location>
</feature>
<feature type="strand" evidence="19">
    <location>
        <begin position="190"/>
        <end position="193"/>
    </location>
</feature>
<feature type="turn" evidence="19">
    <location>
        <begin position="195"/>
        <end position="197"/>
    </location>
</feature>
<feature type="strand" evidence="21">
    <location>
        <begin position="198"/>
        <end position="200"/>
    </location>
</feature>
<feature type="turn" evidence="19">
    <location>
        <begin position="213"/>
        <end position="215"/>
    </location>
</feature>
<feature type="helix" evidence="19">
    <location>
        <begin position="218"/>
        <end position="221"/>
    </location>
</feature>
<feature type="helix" evidence="19">
    <location>
        <begin position="228"/>
        <end position="244"/>
    </location>
</feature>
<feature type="turn" evidence="19">
    <location>
        <begin position="248"/>
        <end position="251"/>
    </location>
</feature>
<feature type="helix" evidence="19">
    <location>
        <begin position="257"/>
        <end position="270"/>
    </location>
</feature>
<feature type="helix" evidence="19">
    <location>
        <begin position="273"/>
        <end position="276"/>
    </location>
</feature>
<feature type="turn" evidence="19">
    <location>
        <begin position="277"/>
        <end position="279"/>
    </location>
</feature>
<feature type="helix" evidence="19">
    <location>
        <begin position="281"/>
        <end position="292"/>
    </location>
</feature>
<feature type="helix" evidence="19">
    <location>
        <begin position="301"/>
        <end position="314"/>
    </location>
</feature>
<feature type="turn" evidence="19">
    <location>
        <begin position="324"/>
        <end position="327"/>
    </location>
</feature>
<feature type="modified residue" description="Phosphoserine" evidence="17">
    <location sequence="Q9Y6M4-3">
        <position position="366"/>
    </location>
</feature>
<feature type="modified residue" description="Phosphoserine" evidence="17">
    <location sequence="Q9Y6M4-4">
        <position position="367"/>
    </location>
</feature>
<feature type="modified residue" description="Phosphoserine" evidence="17">
    <location sequence="Q9Y6M4-5">
        <position position="291"/>
    </location>
</feature>
<feature type="modified residue" description="Phosphoserine" evidence="17">
    <location sequence="Q9Y6M4-6">
        <position position="254"/>
    </location>
</feature>
<organism>
    <name type="scientific">Homo sapiens</name>
    <name type="common">Human</name>
    <dbReference type="NCBI Taxonomy" id="9606"/>
    <lineage>
        <taxon>Eukaryota</taxon>
        <taxon>Metazoa</taxon>
        <taxon>Chordata</taxon>
        <taxon>Craniata</taxon>
        <taxon>Vertebrata</taxon>
        <taxon>Euteleostomi</taxon>
        <taxon>Mammalia</taxon>
        <taxon>Eutheria</taxon>
        <taxon>Euarchontoglires</taxon>
        <taxon>Primates</taxon>
        <taxon>Haplorrhini</taxon>
        <taxon>Catarrhini</taxon>
        <taxon>Hominidae</taxon>
        <taxon>Homo</taxon>
    </lineage>
</organism>
<reference key="1">
    <citation type="journal article" date="1998" name="Cytogenet. Cell Genet.">
        <title>Cloning and chromosome mapping of the human casein kinase I gamma3 gene (CSNK1G3).</title>
        <authorList>
            <person name="Kusuda J."/>
            <person name="Hirai M."/>
            <person name="Toyoda A."/>
            <person name="Tanuma R."/>
            <person name="Hashimoto K."/>
        </authorList>
    </citation>
    <scope>NUCLEOTIDE SEQUENCE [MRNA] (ISOFORMS 1 AND 2)</scope>
    <source>
        <tissue>Testis</tissue>
    </source>
</reference>
<reference key="2">
    <citation type="journal article" date="2004" name="Nat. Genet.">
        <title>Complete sequencing and characterization of 21,243 full-length human cDNAs.</title>
        <authorList>
            <person name="Ota T."/>
            <person name="Suzuki Y."/>
            <person name="Nishikawa T."/>
            <person name="Otsuki T."/>
            <person name="Sugiyama T."/>
            <person name="Irie R."/>
            <person name="Wakamatsu A."/>
            <person name="Hayashi K."/>
            <person name="Sato H."/>
            <person name="Nagai K."/>
            <person name="Kimura K."/>
            <person name="Makita H."/>
            <person name="Sekine M."/>
            <person name="Obayashi M."/>
            <person name="Nishi T."/>
            <person name="Shibahara T."/>
            <person name="Tanaka T."/>
            <person name="Ishii S."/>
            <person name="Yamamoto J."/>
            <person name="Saito K."/>
            <person name="Kawai Y."/>
            <person name="Isono Y."/>
            <person name="Nakamura Y."/>
            <person name="Nagahari K."/>
            <person name="Murakami K."/>
            <person name="Yasuda T."/>
            <person name="Iwayanagi T."/>
            <person name="Wagatsuma M."/>
            <person name="Shiratori A."/>
            <person name="Sudo H."/>
            <person name="Hosoiri T."/>
            <person name="Kaku Y."/>
            <person name="Kodaira H."/>
            <person name="Kondo H."/>
            <person name="Sugawara M."/>
            <person name="Takahashi M."/>
            <person name="Kanda K."/>
            <person name="Yokoi T."/>
            <person name="Furuya T."/>
            <person name="Kikkawa E."/>
            <person name="Omura Y."/>
            <person name="Abe K."/>
            <person name="Kamihara K."/>
            <person name="Katsuta N."/>
            <person name="Sato K."/>
            <person name="Tanikawa M."/>
            <person name="Yamazaki M."/>
            <person name="Ninomiya K."/>
            <person name="Ishibashi T."/>
            <person name="Yamashita H."/>
            <person name="Murakawa K."/>
            <person name="Fujimori K."/>
            <person name="Tanai H."/>
            <person name="Kimata M."/>
            <person name="Watanabe M."/>
            <person name="Hiraoka S."/>
            <person name="Chiba Y."/>
            <person name="Ishida S."/>
            <person name="Ono Y."/>
            <person name="Takiguchi S."/>
            <person name="Watanabe S."/>
            <person name="Yosida M."/>
            <person name="Hotuta T."/>
            <person name="Kusano J."/>
            <person name="Kanehori K."/>
            <person name="Takahashi-Fujii A."/>
            <person name="Hara H."/>
            <person name="Tanase T.-O."/>
            <person name="Nomura Y."/>
            <person name="Togiya S."/>
            <person name="Komai F."/>
            <person name="Hara R."/>
            <person name="Takeuchi K."/>
            <person name="Arita M."/>
            <person name="Imose N."/>
            <person name="Musashino K."/>
            <person name="Yuuki H."/>
            <person name="Oshima A."/>
            <person name="Sasaki N."/>
            <person name="Aotsuka S."/>
            <person name="Yoshikawa Y."/>
            <person name="Matsunawa H."/>
            <person name="Ichihara T."/>
            <person name="Shiohata N."/>
            <person name="Sano S."/>
            <person name="Moriya S."/>
            <person name="Momiyama H."/>
            <person name="Satoh N."/>
            <person name="Takami S."/>
            <person name="Terashima Y."/>
            <person name="Suzuki O."/>
            <person name="Nakagawa S."/>
            <person name="Senoh A."/>
            <person name="Mizoguchi H."/>
            <person name="Goto Y."/>
            <person name="Shimizu F."/>
            <person name="Wakebe H."/>
            <person name="Hishigaki H."/>
            <person name="Watanabe T."/>
            <person name="Sugiyama A."/>
            <person name="Takemoto M."/>
            <person name="Kawakami B."/>
            <person name="Yamazaki M."/>
            <person name="Watanabe K."/>
            <person name="Kumagai A."/>
            <person name="Itakura S."/>
            <person name="Fukuzumi Y."/>
            <person name="Fujimori Y."/>
            <person name="Komiyama M."/>
            <person name="Tashiro H."/>
            <person name="Tanigami A."/>
            <person name="Fujiwara T."/>
            <person name="Ono T."/>
            <person name="Yamada K."/>
            <person name="Fujii Y."/>
            <person name="Ozaki K."/>
            <person name="Hirao M."/>
            <person name="Ohmori Y."/>
            <person name="Kawabata A."/>
            <person name="Hikiji T."/>
            <person name="Kobatake N."/>
            <person name="Inagaki H."/>
            <person name="Ikema Y."/>
            <person name="Okamoto S."/>
            <person name="Okitani R."/>
            <person name="Kawakami T."/>
            <person name="Noguchi S."/>
            <person name="Itoh T."/>
            <person name="Shigeta K."/>
            <person name="Senba T."/>
            <person name="Matsumura K."/>
            <person name="Nakajima Y."/>
            <person name="Mizuno T."/>
            <person name="Morinaga M."/>
            <person name="Sasaki M."/>
            <person name="Togashi T."/>
            <person name="Oyama M."/>
            <person name="Hata H."/>
            <person name="Watanabe M."/>
            <person name="Komatsu T."/>
            <person name="Mizushima-Sugano J."/>
            <person name="Satoh T."/>
            <person name="Shirai Y."/>
            <person name="Takahashi Y."/>
            <person name="Nakagawa K."/>
            <person name="Okumura K."/>
            <person name="Nagase T."/>
            <person name="Nomura N."/>
            <person name="Kikuchi H."/>
            <person name="Masuho Y."/>
            <person name="Yamashita R."/>
            <person name="Nakai K."/>
            <person name="Yada T."/>
            <person name="Nakamura Y."/>
            <person name="Ohara O."/>
            <person name="Isogai T."/>
            <person name="Sugano S."/>
        </authorList>
    </citation>
    <scope>NUCLEOTIDE SEQUENCE [LARGE SCALE MRNA] (ISOFORMS 4; 5 AND 6)</scope>
    <source>
        <tissue>Astrocyte</tissue>
        <tissue>Brain</tissue>
        <tissue>Embryonic brain</tissue>
    </source>
</reference>
<reference key="3">
    <citation type="journal article" date="2004" name="Nature">
        <title>The DNA sequence and comparative analysis of human chromosome 5.</title>
        <authorList>
            <person name="Schmutz J."/>
            <person name="Martin J."/>
            <person name="Terry A."/>
            <person name="Couronne O."/>
            <person name="Grimwood J."/>
            <person name="Lowry S."/>
            <person name="Gordon L.A."/>
            <person name="Scott D."/>
            <person name="Xie G."/>
            <person name="Huang W."/>
            <person name="Hellsten U."/>
            <person name="Tran-Gyamfi M."/>
            <person name="She X."/>
            <person name="Prabhakar S."/>
            <person name="Aerts A."/>
            <person name="Altherr M."/>
            <person name="Bajorek E."/>
            <person name="Black S."/>
            <person name="Branscomb E."/>
            <person name="Caoile C."/>
            <person name="Challacombe J.F."/>
            <person name="Chan Y.M."/>
            <person name="Denys M."/>
            <person name="Detter J.C."/>
            <person name="Escobar J."/>
            <person name="Flowers D."/>
            <person name="Fotopulos D."/>
            <person name="Glavina T."/>
            <person name="Gomez M."/>
            <person name="Gonzales E."/>
            <person name="Goodstein D."/>
            <person name="Grigoriev I."/>
            <person name="Groza M."/>
            <person name="Hammon N."/>
            <person name="Hawkins T."/>
            <person name="Haydu L."/>
            <person name="Israni S."/>
            <person name="Jett J."/>
            <person name="Kadner K."/>
            <person name="Kimball H."/>
            <person name="Kobayashi A."/>
            <person name="Lopez F."/>
            <person name="Lou Y."/>
            <person name="Martinez D."/>
            <person name="Medina C."/>
            <person name="Morgan J."/>
            <person name="Nandkeshwar R."/>
            <person name="Noonan J.P."/>
            <person name="Pitluck S."/>
            <person name="Pollard M."/>
            <person name="Predki P."/>
            <person name="Priest J."/>
            <person name="Ramirez L."/>
            <person name="Retterer J."/>
            <person name="Rodriguez A."/>
            <person name="Rogers S."/>
            <person name="Salamov A."/>
            <person name="Salazar A."/>
            <person name="Thayer N."/>
            <person name="Tice H."/>
            <person name="Tsai M."/>
            <person name="Ustaszewska A."/>
            <person name="Vo N."/>
            <person name="Wheeler J."/>
            <person name="Wu K."/>
            <person name="Yang J."/>
            <person name="Dickson M."/>
            <person name="Cheng J.-F."/>
            <person name="Eichler E.E."/>
            <person name="Olsen A."/>
            <person name="Pennacchio L.A."/>
            <person name="Rokhsar D.S."/>
            <person name="Richardson P."/>
            <person name="Lucas S.M."/>
            <person name="Myers R.M."/>
            <person name="Rubin E.M."/>
        </authorList>
    </citation>
    <scope>NUCLEOTIDE SEQUENCE [LARGE SCALE GENOMIC DNA]</scope>
</reference>
<reference key="4">
    <citation type="submission" date="2005-07" db="EMBL/GenBank/DDBJ databases">
        <authorList>
            <person name="Mural R.J."/>
            <person name="Istrail S."/>
            <person name="Sutton G.G."/>
            <person name="Florea L."/>
            <person name="Halpern A.L."/>
            <person name="Mobarry C.M."/>
            <person name="Lippert R."/>
            <person name="Walenz B."/>
            <person name="Shatkay H."/>
            <person name="Dew I."/>
            <person name="Miller J.R."/>
            <person name="Flanigan M.J."/>
            <person name="Edwards N.J."/>
            <person name="Bolanos R."/>
            <person name="Fasulo D."/>
            <person name="Halldorsson B.V."/>
            <person name="Hannenhalli S."/>
            <person name="Turner R."/>
            <person name="Yooseph S."/>
            <person name="Lu F."/>
            <person name="Nusskern D.R."/>
            <person name="Shue B.C."/>
            <person name="Zheng X.H."/>
            <person name="Zhong F."/>
            <person name="Delcher A.L."/>
            <person name="Huson D.H."/>
            <person name="Kravitz S.A."/>
            <person name="Mouchard L."/>
            <person name="Reinert K."/>
            <person name="Remington K.A."/>
            <person name="Clark A.G."/>
            <person name="Waterman M.S."/>
            <person name="Eichler E.E."/>
            <person name="Adams M.D."/>
            <person name="Hunkapiller M.W."/>
            <person name="Myers E.W."/>
            <person name="Venter J.C."/>
        </authorList>
    </citation>
    <scope>NUCLEOTIDE SEQUENCE [LARGE SCALE GENOMIC DNA]</scope>
</reference>
<reference key="5">
    <citation type="journal article" date="2004" name="Genome Res.">
        <title>The status, quality, and expansion of the NIH full-length cDNA project: the Mammalian Gene Collection (MGC).</title>
        <authorList>
            <consortium name="The MGC Project Team"/>
        </authorList>
    </citation>
    <scope>NUCLEOTIDE SEQUENCE [LARGE SCALE MRNA] (ISOFORM 3)</scope>
    <source>
        <tissue>Brain</tissue>
    </source>
</reference>
<reference key="6">
    <citation type="journal article" date="2006" name="Cell">
        <title>Global, in vivo, and site-specific phosphorylation dynamics in signaling networks.</title>
        <authorList>
            <person name="Olsen J.V."/>
            <person name="Blagoev B."/>
            <person name="Gnad F."/>
            <person name="Macek B."/>
            <person name="Kumar C."/>
            <person name="Mortensen P."/>
            <person name="Mann M."/>
        </authorList>
    </citation>
    <scope>IDENTIFICATION BY MASS SPECTROMETRY [LARGE SCALE ANALYSIS]</scope>
    <source>
        <tissue>Cervix carcinoma</tissue>
    </source>
</reference>
<reference key="7">
    <citation type="journal article" date="2008" name="Mol. Cell">
        <title>Kinase-selective enrichment enables quantitative phosphoproteomics of the kinome across the cell cycle.</title>
        <authorList>
            <person name="Daub H."/>
            <person name="Olsen J.V."/>
            <person name="Bairlein M."/>
            <person name="Gnad F."/>
            <person name="Oppermann F.S."/>
            <person name="Korner R."/>
            <person name="Greff Z."/>
            <person name="Keri G."/>
            <person name="Stemmann O."/>
            <person name="Mann M."/>
        </authorList>
    </citation>
    <scope>PHOSPHORYLATION [LARGE SCALE ANALYSIS] AT SER-413</scope>
    <scope>IDENTIFICATION BY MASS SPECTROMETRY [LARGE SCALE ANALYSIS]</scope>
    <source>
        <tissue>Cervix carcinoma</tissue>
    </source>
</reference>
<reference key="8">
    <citation type="journal article" date="2008" name="Proc. Natl. Acad. Sci. U.S.A.">
        <title>A quantitative atlas of mitotic phosphorylation.</title>
        <authorList>
            <person name="Dephoure N."/>
            <person name="Zhou C."/>
            <person name="Villen J."/>
            <person name="Beausoleil S.A."/>
            <person name="Bakalarski C.E."/>
            <person name="Elledge S.J."/>
            <person name="Gygi S.P."/>
        </authorList>
    </citation>
    <scope>IDENTIFICATION BY MASS SPECTROMETRY [LARGE SCALE ANALYSIS]</scope>
    <source>
        <tissue>Cervix carcinoma</tissue>
    </source>
</reference>
<reference key="9">
    <citation type="journal article" date="2009" name="Mol. Cell. Proteomics">
        <title>Large-scale proteomics analysis of the human kinome.</title>
        <authorList>
            <person name="Oppermann F.S."/>
            <person name="Gnad F."/>
            <person name="Olsen J.V."/>
            <person name="Hornberger R."/>
            <person name="Greff Z."/>
            <person name="Keri G."/>
            <person name="Mann M."/>
            <person name="Daub H."/>
        </authorList>
    </citation>
    <scope>IDENTIFICATION BY MASS SPECTROMETRY [LARGE SCALE ANALYSIS]</scope>
</reference>
<reference key="10">
    <citation type="journal article" date="2010" name="Sci. Signal.">
        <title>Quantitative phosphoproteomics reveals widespread full phosphorylation site occupancy during mitosis.</title>
        <authorList>
            <person name="Olsen J.V."/>
            <person name="Vermeulen M."/>
            <person name="Santamaria A."/>
            <person name="Kumar C."/>
            <person name="Miller M.L."/>
            <person name="Jensen L.J."/>
            <person name="Gnad F."/>
            <person name="Cox J."/>
            <person name="Jensen T.S."/>
            <person name="Nigg E.A."/>
            <person name="Brunak S."/>
            <person name="Mann M."/>
        </authorList>
    </citation>
    <scope>PHOSPHORYLATION [LARGE SCALE ANALYSIS] AT SER-366 (ISOFORM 3)</scope>
    <scope>PHOSPHORYLATION [LARGE SCALE ANALYSIS] AT SER-367 (ISOFORM 4)</scope>
    <scope>PHOSPHORYLATION [LARGE SCALE ANALYSIS] AT SER-291 (ISOFORM 5)</scope>
    <scope>PHOSPHORYLATION [LARGE SCALE ANALYSIS] AT SER-254 (ISOFORM 6)</scope>
    <scope>IDENTIFICATION BY MASS SPECTROMETRY [LARGE SCALE ANALYSIS]</scope>
    <source>
        <tissue>Cervix carcinoma</tissue>
    </source>
</reference>
<reference key="11">
    <citation type="journal article" date="2012" name="Proc. Natl. Acad. Sci. U.S.A.">
        <title>N-terminal acetylome analyses and functional insights of the N-terminal acetyltransferase NatB.</title>
        <authorList>
            <person name="Van Damme P."/>
            <person name="Lasa M."/>
            <person name="Polevoda B."/>
            <person name="Gazquez C."/>
            <person name="Elosegui-Artola A."/>
            <person name="Kim D.S."/>
            <person name="De Juan-Pardo E."/>
            <person name="Demeyer K."/>
            <person name="Hole K."/>
            <person name="Larrea E."/>
            <person name="Timmerman E."/>
            <person name="Prieto J."/>
            <person name="Arnesen T."/>
            <person name="Sherman F."/>
            <person name="Gevaert K."/>
            <person name="Aldabe R."/>
        </authorList>
    </citation>
    <scope>ACETYLATION [LARGE SCALE ANALYSIS] AT MET-1</scope>
    <scope>IDENTIFICATION BY MASS SPECTROMETRY [LARGE SCALE ANALYSIS]</scope>
</reference>
<reference key="12">
    <citation type="journal article" date="2013" name="J. Proteome Res.">
        <title>Toward a comprehensive characterization of a human cancer cell phosphoproteome.</title>
        <authorList>
            <person name="Zhou H."/>
            <person name="Di Palma S."/>
            <person name="Preisinger C."/>
            <person name="Peng M."/>
            <person name="Polat A.N."/>
            <person name="Heck A.J."/>
            <person name="Mohammed S."/>
        </authorList>
    </citation>
    <scope>IDENTIFICATION BY MASS SPECTROMETRY [LARGE SCALE ANALYSIS]</scope>
    <source>
        <tissue>Cervix carcinoma</tissue>
        <tissue>Erythroleukemia</tissue>
    </source>
</reference>
<reference evidence="11" key="13">
    <citation type="submission" date="2006-03" db="PDB data bank">
        <title>Structure of casein kinase 1 gamma 3.</title>
        <authorList>
            <person name="Bunkoczi G."/>
            <person name="Salah E."/>
            <person name="Rellos P."/>
            <person name="Das S."/>
            <person name="Fedorov O."/>
            <person name="Savitsky P."/>
            <person name="Gileadi O."/>
            <person name="Sundstrom M."/>
            <person name="Edwards A."/>
            <person name="Arrowsmith C."/>
            <person name="Ugochukwu E."/>
            <person name="Weigelt J."/>
            <person name="Von Delft F."/>
            <person name="Knapp S."/>
        </authorList>
    </citation>
    <scope>X-RAY CRYSTALLOGRAPHY (1.3 ANGSTROMS) OF 35-362 IN COMPLEX WITH THE INHIBITOR TRIAZOLODIAMINE 1</scope>
    <scope>ACTIVITY REGULATION</scope>
</reference>
<reference evidence="12 13 14 15" key="14">
    <citation type="submission" date="2009-02" db="PDB data bank">
        <title>Inhibitor binding by casein kinases.</title>
        <authorList>
            <person name="Bunkoczi G."/>
            <person name="Salah E."/>
            <person name="Rellos P."/>
            <person name="Das S."/>
            <person name="Fedorov O."/>
            <person name="Savitsky P."/>
            <person name="Debreczeni J.E."/>
            <person name="Gileadi O."/>
            <person name="Sundstrom M."/>
            <person name="Edwards A."/>
            <person name="Arrowsmith C."/>
            <person name="Weigelt J."/>
            <person name="Von Delft F."/>
            <person name="Knapp S."/>
        </authorList>
    </citation>
    <scope>X-RAY CRYSTALLOGRAPHY (1.30 ANGSTROMS) OF 35-362 IN COMPLEX WITH INHIBITORS</scope>
    <scope>ACTIVITY REGULATION</scope>
</reference>
<name>KC1G3_HUMAN</name>